<sequence length="689" mass="76203">MGIWKKLTLLLLLLLLVGLGQPPWPAAMALALRWFLGDPTCLVLLGLALLGRPWISSWMPHWLSLVGAALTLFLLPLQPPPGLRWLHKDVAFTFKMLFYGLKFRRRLNKHPPETFVDALERQALAWPDRVALVCTGSEGSSITNSQLDARSCQAAWVLKAKLKDAVIQNTRDAAAILVLPSKTISALSVFLGLAKLGCPVAWINPHSRGMPLLHSVRSSGASVLIVDPDLQENLEEVLPKLLAENIHCFYLGHSSPTPGVEALGASLDAAPSDPVPASLRATIKWKSPAIFIFTSGTTGLPKPAILSHERVIQVSNVLSFCGCRADDVVYDVLPLYHTIGLVLGFLGCLQVGATCVLAPKFSASRFWAECRQHGVTVILYVGEILRYLCNVPEQPEDKIHTVRLAMGNGLRANVWKNFQQRFGPIRIWEFYGSTEGNVGLMNYVGHCGAVGRTSCILRMLTPFELVQFDIETAEPLRDKQGFCIPVEPGKPGLLLTKVRKNQPFLGYRGSQAESNRKLVANVRRVGDLYFNTGDVLTLDQEGFFYFQDRLGDTFRWKGENVSTGEVECVLSSLDFLEEVNVYGVPVPGCEGKVGMAAVKLAPGKTFDGQKLYQHVRSWLPAYATPHFIRIQDSLEITNTYKLVKSRLVREGFDVGIIADPLYILDNKAQTFRSLMPDVYQAVCEGTWNL</sequence>
<keyword id="KW-0067">ATP-binding</keyword>
<keyword id="KW-1003">Cell membrane</keyword>
<keyword id="KW-0256">Endoplasmic reticulum</keyword>
<keyword id="KW-0276">Fatty acid metabolism</keyword>
<keyword id="KW-0436">Ligase</keyword>
<keyword id="KW-0443">Lipid metabolism</keyword>
<keyword id="KW-0445">Lipid transport</keyword>
<keyword id="KW-0472">Membrane</keyword>
<keyword id="KW-0492">Microsome</keyword>
<keyword id="KW-0547">Nucleotide-binding</keyword>
<keyword id="KW-1185">Reference proteome</keyword>
<keyword id="KW-0812">Transmembrane</keyword>
<keyword id="KW-1133">Transmembrane helix</keyword>
<keyword id="KW-0813">Transport</keyword>
<accession>Q4LDG0</accession>
<accession>A6H6C1</accession>
<accession>O88694</accession>
<accession>Q91VD5</accession>
<evidence type="ECO:0000250" key="1">
    <source>
        <dbReference type="UniProtKB" id="Q9ES38"/>
    </source>
</evidence>
<evidence type="ECO:0000250" key="2">
    <source>
        <dbReference type="UniProtKB" id="Q9Y2P5"/>
    </source>
</evidence>
<evidence type="ECO:0000255" key="3"/>
<evidence type="ECO:0000269" key="4">
    <source>
    </source>
</evidence>
<evidence type="ECO:0000269" key="5">
    <source>
    </source>
</evidence>
<evidence type="ECO:0000269" key="6">
    <source>
    </source>
</evidence>
<evidence type="ECO:0000269" key="7">
    <source>
    </source>
</evidence>
<evidence type="ECO:0000303" key="8">
    <source>
    </source>
</evidence>
<evidence type="ECO:0000303" key="9">
    <source>
    </source>
</evidence>
<evidence type="ECO:0000303" key="10">
    <source>
    </source>
</evidence>
<evidence type="ECO:0000305" key="11"/>
<evidence type="ECO:0000305" key="12">
    <source>
    </source>
</evidence>
<dbReference type="EC" id="6.2.1.7" evidence="6"/>
<dbReference type="EC" id="6.2.1.3" evidence="2"/>
<dbReference type="EC" id="6.2.1.-" evidence="2"/>
<dbReference type="EMBL" id="AJ223959">
    <property type="protein sequence ID" value="CAA11688.1"/>
    <property type="molecule type" value="mRNA"/>
</dbReference>
<dbReference type="EMBL" id="BC013335">
    <property type="protein sequence ID" value="AAH13335.1"/>
    <property type="molecule type" value="mRNA"/>
</dbReference>
<dbReference type="EMBL" id="BC013272">
    <property type="protein sequence ID" value="AAH13272.1"/>
    <property type="molecule type" value="mRNA"/>
</dbReference>
<dbReference type="EMBL" id="BC145823">
    <property type="protein sequence ID" value="AAI45824.1"/>
    <property type="molecule type" value="mRNA"/>
</dbReference>
<dbReference type="EMBL" id="BC145825">
    <property type="protein sequence ID" value="AAI45826.1"/>
    <property type="molecule type" value="mRNA"/>
</dbReference>
<dbReference type="EMBL" id="AF072760">
    <property type="protein sequence ID" value="AAC40189.1"/>
    <property type="molecule type" value="mRNA"/>
</dbReference>
<dbReference type="CCDS" id="CCDS20821.1"/>
<dbReference type="PIR" id="JW0107">
    <property type="entry name" value="JW0107"/>
</dbReference>
<dbReference type="RefSeq" id="NP_033538.2">
    <property type="nucleotide sequence ID" value="NM_009512.2"/>
</dbReference>
<dbReference type="SMR" id="Q4LDG0"/>
<dbReference type="FunCoup" id="Q4LDG0">
    <property type="interactions" value="125"/>
</dbReference>
<dbReference type="STRING" id="10090.ENSMUSP00000032539"/>
<dbReference type="TCDB" id="4.C.1.1.8">
    <property type="family name" value="the fatty acid group translocation (fat) family"/>
</dbReference>
<dbReference type="GlyGen" id="Q4LDG0">
    <property type="glycosylation" value="2 sites, 1 O-linked glycan (1 site)"/>
</dbReference>
<dbReference type="iPTMnet" id="Q4LDG0"/>
<dbReference type="PhosphoSitePlus" id="Q4LDG0"/>
<dbReference type="SwissPalm" id="Q4LDG0"/>
<dbReference type="jPOST" id="Q4LDG0"/>
<dbReference type="PaxDb" id="10090-ENSMUSP00000032539"/>
<dbReference type="PeptideAtlas" id="Q4LDG0"/>
<dbReference type="ProteomicsDB" id="260900"/>
<dbReference type="Antibodypedia" id="1943">
    <property type="antibodies" value="309 antibodies from 27 providers"/>
</dbReference>
<dbReference type="DNASU" id="26459"/>
<dbReference type="Ensembl" id="ENSMUST00000032539.14">
    <property type="protein sequence ID" value="ENSMUSP00000032539.8"/>
    <property type="gene ID" value="ENSMUSG00000030382.16"/>
</dbReference>
<dbReference type="GeneID" id="26459"/>
<dbReference type="KEGG" id="mmu:26459"/>
<dbReference type="UCSC" id="uc009fey.3">
    <property type="organism name" value="mouse"/>
</dbReference>
<dbReference type="AGR" id="MGI:1347100"/>
<dbReference type="CTD" id="10998"/>
<dbReference type="MGI" id="MGI:1347100">
    <property type="gene designation" value="Slc27a5"/>
</dbReference>
<dbReference type="VEuPathDB" id="HostDB:ENSMUSG00000030382"/>
<dbReference type="eggNOG" id="KOG1179">
    <property type="taxonomic scope" value="Eukaryota"/>
</dbReference>
<dbReference type="GeneTree" id="ENSGT00940000157947"/>
<dbReference type="HOGENOM" id="CLU_000022_46_2_1"/>
<dbReference type="InParanoid" id="Q4LDG0"/>
<dbReference type="OMA" id="ATFFTYV"/>
<dbReference type="OrthoDB" id="288590at2759"/>
<dbReference type="PhylomeDB" id="Q4LDG0"/>
<dbReference type="TreeFam" id="TF313430"/>
<dbReference type="Reactome" id="R-MMU-159418">
    <property type="pathway name" value="Recycling of bile acids and salts"/>
</dbReference>
<dbReference type="Reactome" id="R-MMU-193368">
    <property type="pathway name" value="Synthesis of bile acids and bile salts via 7alpha-hydroxycholesterol"/>
</dbReference>
<dbReference type="Reactome" id="R-MMU-193775">
    <property type="pathway name" value="Synthesis of bile acids and bile salts via 24-hydroxycholesterol"/>
</dbReference>
<dbReference type="BioGRID-ORCS" id="26459">
    <property type="hits" value="2 hits in 78 CRISPR screens"/>
</dbReference>
<dbReference type="ChiTaRS" id="Slc27a5">
    <property type="organism name" value="mouse"/>
</dbReference>
<dbReference type="PRO" id="PR:Q4LDG0"/>
<dbReference type="Proteomes" id="UP000000589">
    <property type="component" value="Chromosome 7"/>
</dbReference>
<dbReference type="RNAct" id="Q4LDG0">
    <property type="molecule type" value="protein"/>
</dbReference>
<dbReference type="Bgee" id="ENSMUSG00000030382">
    <property type="expression patterns" value="Expressed in left lobe of liver and 36 other cell types or tissues"/>
</dbReference>
<dbReference type="ExpressionAtlas" id="Q4LDG0">
    <property type="expression patterns" value="baseline and differential"/>
</dbReference>
<dbReference type="GO" id="GO:0009925">
    <property type="term" value="C:basal plasma membrane"/>
    <property type="evidence" value="ECO:0000314"/>
    <property type="project" value="MGI"/>
</dbReference>
<dbReference type="GO" id="GO:0005783">
    <property type="term" value="C:endoplasmic reticulum"/>
    <property type="evidence" value="ECO:0000304"/>
    <property type="project" value="MGI"/>
</dbReference>
<dbReference type="GO" id="GO:0005789">
    <property type="term" value="C:endoplasmic reticulum membrane"/>
    <property type="evidence" value="ECO:0007669"/>
    <property type="project" value="UniProtKB-SubCell"/>
</dbReference>
<dbReference type="GO" id="GO:0032991">
    <property type="term" value="C:protein-containing complex"/>
    <property type="evidence" value="ECO:0007669"/>
    <property type="project" value="Ensembl"/>
</dbReference>
<dbReference type="GO" id="GO:0005524">
    <property type="term" value="F:ATP binding"/>
    <property type="evidence" value="ECO:0007669"/>
    <property type="project" value="UniProtKB-KW"/>
</dbReference>
<dbReference type="GO" id="GO:0047747">
    <property type="term" value="F:cholate-CoA ligase activity"/>
    <property type="evidence" value="ECO:0000315"/>
    <property type="project" value="UniProtKB"/>
</dbReference>
<dbReference type="GO" id="GO:0015245">
    <property type="term" value="F:fatty acid transmembrane transporter activity"/>
    <property type="evidence" value="ECO:0000314"/>
    <property type="project" value="MGI"/>
</dbReference>
<dbReference type="GO" id="GO:0005324">
    <property type="term" value="F:long-chain fatty acid transmembrane transporter activity"/>
    <property type="evidence" value="ECO:0007669"/>
    <property type="project" value="Ensembl"/>
</dbReference>
<dbReference type="GO" id="GO:0004467">
    <property type="term" value="F:long-chain fatty acid-CoA ligase activity"/>
    <property type="evidence" value="ECO:0000304"/>
    <property type="project" value="MGI"/>
</dbReference>
<dbReference type="GO" id="GO:0044877">
    <property type="term" value="F:protein-containing complex binding"/>
    <property type="evidence" value="ECO:0007669"/>
    <property type="project" value="Ensembl"/>
</dbReference>
<dbReference type="GO" id="GO:0031957">
    <property type="term" value="F:very long-chain fatty acid-CoA ligase activity"/>
    <property type="evidence" value="ECO:0007669"/>
    <property type="project" value="Ensembl"/>
</dbReference>
<dbReference type="GO" id="GO:0006699">
    <property type="term" value="P:bile acid biosynthetic process"/>
    <property type="evidence" value="ECO:0007669"/>
    <property type="project" value="Ensembl"/>
</dbReference>
<dbReference type="GO" id="GO:0008206">
    <property type="term" value="P:bile acid metabolic process"/>
    <property type="evidence" value="ECO:0000315"/>
    <property type="project" value="MGI"/>
</dbReference>
<dbReference type="GO" id="GO:0051649">
    <property type="term" value="P:establishment of localization in cell"/>
    <property type="evidence" value="ECO:0000315"/>
    <property type="project" value="MGI"/>
</dbReference>
<dbReference type="GO" id="GO:0015908">
    <property type="term" value="P:fatty acid transport"/>
    <property type="evidence" value="ECO:0000314"/>
    <property type="project" value="MGI"/>
</dbReference>
<dbReference type="GO" id="GO:0046951">
    <property type="term" value="P:ketone body biosynthetic process"/>
    <property type="evidence" value="ECO:0000315"/>
    <property type="project" value="MGI"/>
</dbReference>
<dbReference type="GO" id="GO:0015911">
    <property type="term" value="P:long-chain fatty acid import across plasma membrane"/>
    <property type="evidence" value="ECO:0000315"/>
    <property type="project" value="MGI"/>
</dbReference>
<dbReference type="GO" id="GO:0001676">
    <property type="term" value="P:long-chain fatty acid metabolic process"/>
    <property type="evidence" value="ECO:0000304"/>
    <property type="project" value="MGI"/>
</dbReference>
<dbReference type="GO" id="GO:0006642">
    <property type="term" value="P:triglyceride mobilization"/>
    <property type="evidence" value="ECO:0000315"/>
    <property type="project" value="MGI"/>
</dbReference>
<dbReference type="GO" id="GO:0000038">
    <property type="term" value="P:very long-chain fatty acid metabolic process"/>
    <property type="evidence" value="ECO:0007669"/>
    <property type="project" value="Ensembl"/>
</dbReference>
<dbReference type="CDD" id="cd05938">
    <property type="entry name" value="hsFATP2a_ACSVL_like"/>
    <property type="match status" value="1"/>
</dbReference>
<dbReference type="FunFam" id="3.30.300.30:FF:000002">
    <property type="entry name" value="Long-chain fatty acid transport protein 1"/>
    <property type="match status" value="1"/>
</dbReference>
<dbReference type="FunFam" id="3.40.50.12780:FF:000005">
    <property type="entry name" value="Solute carrier family 27 member 6"/>
    <property type="match status" value="1"/>
</dbReference>
<dbReference type="Gene3D" id="3.30.300.30">
    <property type="match status" value="1"/>
</dbReference>
<dbReference type="Gene3D" id="3.40.50.12780">
    <property type="entry name" value="N-terminal domain of ligase-like"/>
    <property type="match status" value="1"/>
</dbReference>
<dbReference type="InterPro" id="IPR025110">
    <property type="entry name" value="AMP-bd_C"/>
</dbReference>
<dbReference type="InterPro" id="IPR045851">
    <property type="entry name" value="AMP-bd_C_sf"/>
</dbReference>
<dbReference type="InterPro" id="IPR020845">
    <property type="entry name" value="AMP-binding_CS"/>
</dbReference>
<dbReference type="InterPro" id="IPR000873">
    <property type="entry name" value="AMP-dep_synth/lig_dom"/>
</dbReference>
<dbReference type="InterPro" id="IPR042099">
    <property type="entry name" value="ANL_N_sf"/>
</dbReference>
<dbReference type="PANTHER" id="PTHR43107">
    <property type="entry name" value="LONG-CHAIN FATTY ACID TRANSPORT PROTEIN"/>
    <property type="match status" value="1"/>
</dbReference>
<dbReference type="PANTHER" id="PTHR43107:SF25">
    <property type="entry name" value="LONG-CHAIN FATTY ACID TRANSPORT PROTEIN 5"/>
    <property type="match status" value="1"/>
</dbReference>
<dbReference type="Pfam" id="PF00501">
    <property type="entry name" value="AMP-binding"/>
    <property type="match status" value="1"/>
</dbReference>
<dbReference type="Pfam" id="PF13193">
    <property type="entry name" value="AMP-binding_C"/>
    <property type="match status" value="1"/>
</dbReference>
<dbReference type="SUPFAM" id="SSF56801">
    <property type="entry name" value="Acetyl-CoA synthetase-like"/>
    <property type="match status" value="1"/>
</dbReference>
<dbReference type="PROSITE" id="PS00455">
    <property type="entry name" value="AMP_BINDING"/>
    <property type="match status" value="1"/>
</dbReference>
<comment type="function">
    <text evidence="2 5 6">Mediates the import of long-chain fatty acids (LCFA) by facilitating their transport across cell membranes (PubMed:16618416). Also catalyzes the ATP-dependent formation of fatty acyl-CoA using LCFA and very-long-chain fatty acids (VLCFA) as substrates (By similarity). Mainly functions as a bile acyl-CoA synthetase catalyzing the activation of bile acids via ATP-dependent formation of bile acid CoA thioesters which is necessary for their subsequent conjugation with glycine or taurine (PubMed:16618417). Both primary bile acids (cholic acid and chenodeoxycholic acid) and secondary bile acids (deoxycholic acid and lithocholic acid) are the principal substrates (By similarity). In vitro, activates 3-alpha,7-alpha,12-alpha-trihydroxy-5-beta-cholestanate ((25R)-3alpha,7alpha,12alpha-trihydroxy-5beta-cholestan-26-oate or THCA), the C27 precursor of cholic acid deriving from the de novo synthesis from cholesterol (By similarity). Plays an important role in hepatic fatty acid uptake and bile acid reconjugation and recycling but not in de novo synthesis of bile acids (PubMed:16618416, PubMed:16618417).</text>
</comment>
<comment type="catalytic activity">
    <reaction evidence="5">
        <text>a fatty acid(in) = a fatty acid(out)</text>
        <dbReference type="Rhea" id="RHEA:38879"/>
        <dbReference type="ChEBI" id="CHEBI:28868"/>
    </reaction>
</comment>
<comment type="catalytic activity">
    <reaction evidence="6">
        <text>cholate + ATP + CoA = choloyl-CoA + AMP + diphosphate</text>
        <dbReference type="Rhea" id="RHEA:23532"/>
        <dbReference type="ChEBI" id="CHEBI:29747"/>
        <dbReference type="ChEBI" id="CHEBI:30616"/>
        <dbReference type="ChEBI" id="CHEBI:33019"/>
        <dbReference type="ChEBI" id="CHEBI:57287"/>
        <dbReference type="ChEBI" id="CHEBI:57373"/>
        <dbReference type="ChEBI" id="CHEBI:456215"/>
        <dbReference type="EC" id="6.2.1.7"/>
    </reaction>
    <physiologicalReaction direction="left-to-right" evidence="12">
        <dbReference type="Rhea" id="RHEA:23533"/>
    </physiologicalReaction>
</comment>
<comment type="catalytic activity">
    <reaction evidence="2">
        <text>(25R)-3alpha,7alpha,12alpha-trihydroxy-5beta-cholestan-26-oate + ATP + CoA = (25R)-3alpha,7alpha,12alpha-trihydroxy-5beta-cholestan-26-oyl-CoA + AMP + diphosphate</text>
        <dbReference type="Rhea" id="RHEA:22976"/>
        <dbReference type="ChEBI" id="CHEBI:30616"/>
        <dbReference type="ChEBI" id="CHEBI:33019"/>
        <dbReference type="ChEBI" id="CHEBI:57287"/>
        <dbReference type="ChEBI" id="CHEBI:58677"/>
        <dbReference type="ChEBI" id="CHEBI:58734"/>
        <dbReference type="ChEBI" id="CHEBI:456215"/>
        <dbReference type="EC" id="6.2.1.7"/>
    </reaction>
    <physiologicalReaction direction="left-to-right" evidence="2">
        <dbReference type="Rhea" id="RHEA:22977"/>
    </physiologicalReaction>
</comment>
<comment type="catalytic activity">
    <reaction evidence="2">
        <text>chenodeoxycholate + ATP + CoA = chenodeoxycholoyl-CoA + AMP + diphosphate</text>
        <dbReference type="Rhea" id="RHEA:43764"/>
        <dbReference type="ChEBI" id="CHEBI:30616"/>
        <dbReference type="ChEBI" id="CHEBI:33019"/>
        <dbReference type="ChEBI" id="CHEBI:36234"/>
        <dbReference type="ChEBI" id="CHEBI:57287"/>
        <dbReference type="ChEBI" id="CHEBI:62989"/>
        <dbReference type="ChEBI" id="CHEBI:456215"/>
    </reaction>
    <physiologicalReaction direction="left-to-right" evidence="2">
        <dbReference type="Rhea" id="RHEA:43765"/>
    </physiologicalReaction>
</comment>
<comment type="catalytic activity">
    <reaction evidence="2">
        <text>deoxycholate + ATP + CoA = deoxycholoyl-CoA + AMP + diphosphate</text>
        <dbReference type="Rhea" id="RHEA:47128"/>
        <dbReference type="ChEBI" id="CHEBI:23614"/>
        <dbReference type="ChEBI" id="CHEBI:30616"/>
        <dbReference type="ChEBI" id="CHEBI:33019"/>
        <dbReference type="ChEBI" id="CHEBI:57287"/>
        <dbReference type="ChEBI" id="CHEBI:58810"/>
        <dbReference type="ChEBI" id="CHEBI:456215"/>
    </reaction>
    <physiologicalReaction direction="left-to-right" evidence="2">
        <dbReference type="Rhea" id="RHEA:47129"/>
    </physiologicalReaction>
</comment>
<comment type="catalytic activity">
    <reaction evidence="2">
        <text>lithocholate + ATP + CoA = lithocholoyl-CoA + AMP + diphosphate</text>
        <dbReference type="Rhea" id="RHEA:47136"/>
        <dbReference type="ChEBI" id="CHEBI:29744"/>
        <dbReference type="ChEBI" id="CHEBI:30616"/>
        <dbReference type="ChEBI" id="CHEBI:33019"/>
        <dbReference type="ChEBI" id="CHEBI:57287"/>
        <dbReference type="ChEBI" id="CHEBI:87438"/>
        <dbReference type="ChEBI" id="CHEBI:456215"/>
    </reaction>
    <physiologicalReaction direction="left-to-right" evidence="2">
        <dbReference type="Rhea" id="RHEA:47137"/>
    </physiologicalReaction>
</comment>
<comment type="catalytic activity">
    <reaction evidence="2">
        <text>a very long-chain fatty acid + ATP + CoA = a very long-chain fatty acyl-CoA + AMP + diphosphate</text>
        <dbReference type="Rhea" id="RHEA:54536"/>
        <dbReference type="ChEBI" id="CHEBI:30616"/>
        <dbReference type="ChEBI" id="CHEBI:33019"/>
        <dbReference type="ChEBI" id="CHEBI:57287"/>
        <dbReference type="ChEBI" id="CHEBI:58950"/>
        <dbReference type="ChEBI" id="CHEBI:138261"/>
        <dbReference type="ChEBI" id="CHEBI:456215"/>
    </reaction>
    <physiologicalReaction direction="left-to-right" evidence="2">
        <dbReference type="Rhea" id="RHEA:54537"/>
    </physiologicalReaction>
</comment>
<comment type="catalytic activity">
    <reaction evidence="2">
        <text>tetracosanoate + ATP + CoA = tetracosanoyl-CoA + AMP + diphosphate</text>
        <dbReference type="Rhea" id="RHEA:33639"/>
        <dbReference type="ChEBI" id="CHEBI:30616"/>
        <dbReference type="ChEBI" id="CHEBI:31014"/>
        <dbReference type="ChEBI" id="CHEBI:33019"/>
        <dbReference type="ChEBI" id="CHEBI:57287"/>
        <dbReference type="ChEBI" id="CHEBI:65052"/>
        <dbReference type="ChEBI" id="CHEBI:456215"/>
    </reaction>
    <physiologicalReaction direction="left-to-right" evidence="2">
        <dbReference type="Rhea" id="RHEA:33640"/>
    </physiologicalReaction>
</comment>
<comment type="catalytic activity">
    <reaction evidence="2">
        <text>hexacosanoate + ATP + CoA = hexacosanoyl-CoA + AMP + diphosphate</text>
        <dbReference type="Rhea" id="RHEA:43748"/>
        <dbReference type="ChEBI" id="CHEBI:30616"/>
        <dbReference type="ChEBI" id="CHEBI:31013"/>
        <dbReference type="ChEBI" id="CHEBI:33019"/>
        <dbReference type="ChEBI" id="CHEBI:57287"/>
        <dbReference type="ChEBI" id="CHEBI:64868"/>
        <dbReference type="ChEBI" id="CHEBI:456215"/>
    </reaction>
    <physiologicalReaction direction="left-to-right" evidence="2">
        <dbReference type="Rhea" id="RHEA:43749"/>
    </physiologicalReaction>
</comment>
<comment type="catalytic activity">
    <reaction evidence="2">
        <text>a long-chain fatty acid + ATP + CoA = a long-chain fatty acyl-CoA + AMP + diphosphate</text>
        <dbReference type="Rhea" id="RHEA:15421"/>
        <dbReference type="ChEBI" id="CHEBI:30616"/>
        <dbReference type="ChEBI" id="CHEBI:33019"/>
        <dbReference type="ChEBI" id="CHEBI:57287"/>
        <dbReference type="ChEBI" id="CHEBI:57560"/>
        <dbReference type="ChEBI" id="CHEBI:83139"/>
        <dbReference type="ChEBI" id="CHEBI:456215"/>
        <dbReference type="EC" id="6.2.1.3"/>
    </reaction>
    <physiologicalReaction direction="left-to-right" evidence="2">
        <dbReference type="Rhea" id="RHEA:15422"/>
    </physiologicalReaction>
</comment>
<comment type="catalytic activity">
    <reaction evidence="2">
        <text>octadecanoate + ATP + CoA = octadecanoyl-CoA + AMP + diphosphate</text>
        <dbReference type="Rhea" id="RHEA:33615"/>
        <dbReference type="ChEBI" id="CHEBI:25629"/>
        <dbReference type="ChEBI" id="CHEBI:30616"/>
        <dbReference type="ChEBI" id="CHEBI:33019"/>
        <dbReference type="ChEBI" id="CHEBI:57287"/>
        <dbReference type="ChEBI" id="CHEBI:57394"/>
        <dbReference type="ChEBI" id="CHEBI:456215"/>
    </reaction>
    <physiologicalReaction direction="left-to-right" evidence="2">
        <dbReference type="Rhea" id="RHEA:33616"/>
    </physiologicalReaction>
</comment>
<comment type="catalytic activity">
    <reaction evidence="2">
        <text>eicosanoate + ATP + CoA = eicosanoyl-CoA + AMP + diphosphate</text>
        <dbReference type="Rhea" id="RHEA:46208"/>
        <dbReference type="ChEBI" id="CHEBI:30616"/>
        <dbReference type="ChEBI" id="CHEBI:32360"/>
        <dbReference type="ChEBI" id="CHEBI:33019"/>
        <dbReference type="ChEBI" id="CHEBI:57287"/>
        <dbReference type="ChEBI" id="CHEBI:57380"/>
        <dbReference type="ChEBI" id="CHEBI:456215"/>
    </reaction>
    <physiologicalReaction direction="left-to-right" evidence="2">
        <dbReference type="Rhea" id="RHEA:46209"/>
    </physiologicalReaction>
</comment>
<comment type="subcellular location">
    <subcellularLocation>
        <location evidence="2">Endoplasmic reticulum membrane</location>
        <topology evidence="3">Multi-pass membrane protein</topology>
    </subcellularLocation>
    <subcellularLocation>
        <location evidence="1">Microsome</location>
    </subcellularLocation>
    <subcellularLocation>
        <location evidence="5">Cell membrane</location>
        <topology evidence="3">Multi-pass membrane protein</topology>
    </subcellularLocation>
</comment>
<comment type="tissue specificity">
    <text evidence="4 5 7">Liver-specific (at protein level) (PubMed:16618416, PubMed:9642112). In liver expressed in a periportal distribution (PubMed:11980911).</text>
</comment>
<comment type="disruption phenotype">
    <text evidence="5 6">Mice exhibit a severe bile acid conjugation defect (PubMed:16618417). Display a significant reduction in both liver lipid uptake and content and show a redistribution of lipids away from the liver to other tissues (PubMed:16618416). Hepatocytes show significantly reduced long-chain fatty acids (LCFA) uptake (PubMed:16618416).</text>
</comment>
<comment type="similarity">
    <text evidence="11">Belongs to the ATP-dependent AMP-binding enzyme family.</text>
</comment>
<reference key="1">
    <citation type="journal article" date="1998" name="Biochem. Biophys. Res. Commun.">
        <title>A novel relative of the very-long-chain acyl-CoA synthetase and fatty acid transporter protein genes with a distinct expression pattern.</title>
        <authorList>
            <person name="Berger J."/>
            <person name="Truppe C."/>
            <person name="Neumann H."/>
            <person name="Forss-Petter S."/>
        </authorList>
    </citation>
    <scope>NUCLEOTIDE SEQUENCE [MRNA]</scope>
    <scope>TISSUE SPECIFICITY</scope>
    <source>
        <strain>BALB/cJ</strain>
        <tissue>Liver</tissue>
    </source>
</reference>
<reference key="2">
    <citation type="journal article" date="2004" name="Genome Res.">
        <title>The status, quality, and expansion of the NIH full-length cDNA project: the Mammalian Gene Collection (MGC).</title>
        <authorList>
            <consortium name="The MGC Project Team"/>
        </authorList>
    </citation>
    <scope>NUCLEOTIDE SEQUENCE [LARGE SCALE MRNA]</scope>
    <source>
        <strain>FVB/N</strain>
        <tissue>Brain</tissue>
        <tissue>Salivary gland</tissue>
    </source>
</reference>
<reference key="3">
    <citation type="journal article" date="1998" name="Proc. Natl. Acad. Sci. U.S.A.">
        <title>A family of fatty acid transporters conserved from mycobacterium to man.</title>
        <authorList>
            <person name="Hirsch D."/>
            <person name="Stahl A."/>
            <person name="Lodish H.F."/>
        </authorList>
    </citation>
    <scope>NUCLEOTIDE SEQUENCE [MRNA] OF 28-689</scope>
</reference>
<reference key="4">
    <citation type="journal article" date="2002" name="J. Biol. Chem.">
        <title>Participation of two members of the very long-chain acyl-CoA synthetase family in bile acid synthesis and recycling.</title>
        <authorList>
            <person name="Mihalik S.J."/>
            <person name="Steinberg S.J."/>
            <person name="Pei Z."/>
            <person name="Park J."/>
            <person name="Kim do G."/>
            <person name="Heinzer A.K."/>
            <person name="Dacremont G."/>
            <person name="Wanders R.J."/>
            <person name="Cuebas D.A."/>
            <person name="Smith K.D."/>
            <person name="Watkins P.A."/>
        </authorList>
    </citation>
    <scope>TISSUE SPECIFICITY</scope>
</reference>
<reference key="5">
    <citation type="journal article" date="2010" name="Cell">
        <title>A tissue-specific atlas of mouse protein phosphorylation and expression.</title>
        <authorList>
            <person name="Huttlin E.L."/>
            <person name="Jedrychowski M.P."/>
            <person name="Elias J.E."/>
            <person name="Goswami T."/>
            <person name="Rad R."/>
            <person name="Beausoleil S.A."/>
            <person name="Villen J."/>
            <person name="Haas W."/>
            <person name="Sowa M.E."/>
            <person name="Gygi S.P."/>
        </authorList>
    </citation>
    <scope>IDENTIFICATION BY MASS SPECTROMETRY [LARGE SCALE ANALYSIS]</scope>
    <source>
        <tissue>Liver</tissue>
    </source>
</reference>
<reference key="6">
    <citation type="journal article" date="2006" name="Gastroenterology">
        <title>Targeted deletion of FATP5 reveals multiple functions in liver metabolism: alterations in hepatic lipid homeostasis.</title>
        <authorList>
            <person name="Doege H."/>
            <person name="Baillie R.A."/>
            <person name="Ortegon A.M."/>
            <person name="Tsang B."/>
            <person name="Wu Q."/>
            <person name="Punreddy S."/>
            <person name="Hirsch D."/>
            <person name="Watson N."/>
            <person name="Gimeno R.E."/>
            <person name="Stahl A."/>
        </authorList>
    </citation>
    <scope>FUNCTION</scope>
    <scope>TRANSPORT ACTIVITY</scope>
    <scope>TISSUE SPECIFICITY</scope>
    <scope>SUBCELLULAR LOCATION</scope>
    <scope>DISRUPTION PHENOTYPE</scope>
</reference>
<reference key="7">
    <citation type="journal article" date="2006" name="Gastroenterology">
        <title>Mice deleted for fatty acid transport protein 5 have defective bile acid conjugation and are protected from obesity.</title>
        <authorList>
            <person name="Hubbard B."/>
            <person name="Doege H."/>
            <person name="Punreddy S."/>
            <person name="Wu H."/>
            <person name="Huang X."/>
            <person name="Kaushik V.K."/>
            <person name="Mozell R.L."/>
            <person name="Byrnes J.J."/>
            <person name="Stricker-Krongrad A."/>
            <person name="Chou C.J."/>
            <person name="Tartaglia L.A."/>
            <person name="Lodish H.F."/>
            <person name="Stahl A."/>
            <person name="Gimeno R.E."/>
        </authorList>
    </citation>
    <scope>FUNCTION</scope>
    <scope>CATALYTIC ACTIVITY</scope>
    <scope>DISRUPTION PHENOTYPE</scope>
</reference>
<proteinExistence type="evidence at protein level"/>
<protein>
    <recommendedName>
        <fullName evidence="11">Long-chain fatty acid transport protein 5</fullName>
        <shortName evidence="8 9">FATP-5</shortName>
        <shortName evidence="8 9">Fatty acid transport protein 5</shortName>
    </recommendedName>
    <alternativeName>
        <fullName evidence="9">Bile acid-CoA ligase</fullName>
        <shortName evidence="9">BA-CoA ligase</shortName>
        <shortName evidence="9">BAL</shortName>
    </alternativeName>
    <alternativeName>
        <fullName evidence="2">Bile acyl-CoA synthetase</fullName>
        <shortName evidence="2">BACS</shortName>
        <ecNumber evidence="6">6.2.1.7</ecNumber>
    </alternativeName>
    <alternativeName>
        <fullName evidence="9">Cholate--CoA ligase</fullName>
    </alternativeName>
    <alternativeName>
        <fullName>Long-chain-fatty-acid--CoA ligase</fullName>
        <ecNumber evidence="2">6.2.1.3</ecNumber>
    </alternativeName>
    <alternativeName>
        <fullName>Solute carrier family 27 member 5</fullName>
    </alternativeName>
    <alternativeName>
        <fullName evidence="10">Very long-chain acyl-CoA synthetase-related protein</fullName>
        <shortName evidence="10">VLACS-related</shortName>
        <shortName evidence="10">VLACSR</shortName>
        <ecNumber evidence="2">6.2.1.-</ecNumber>
    </alternativeName>
</protein>
<feature type="chain" id="PRO_0000193214" description="Long-chain fatty acid transport protein 5">
    <location>
        <begin position="1"/>
        <end position="689"/>
    </location>
</feature>
<feature type="topological domain" description="Cytoplasmic" evidence="2">
    <location>
        <begin position="1"/>
        <end position="29"/>
    </location>
</feature>
<feature type="transmembrane region" description="Helical" evidence="3">
    <location>
        <begin position="30"/>
        <end position="50"/>
    </location>
</feature>
<feature type="transmembrane region" description="Helical" evidence="3">
    <location>
        <begin position="55"/>
        <end position="75"/>
    </location>
</feature>
<feature type="topological domain" description="Cytoplasmic" evidence="2">
    <location>
        <begin position="76"/>
        <end position="689"/>
    </location>
</feature>
<feature type="binding site" evidence="3">
    <location>
        <begin position="292"/>
        <end position="303"/>
    </location>
    <ligand>
        <name>AMP</name>
        <dbReference type="ChEBI" id="CHEBI:456215"/>
    </ligand>
</feature>
<feature type="sequence conflict" description="In Ref. 1; CAA11688." evidence="11" ref="1">
    <original>K</original>
    <variation>I</variation>
    <location>
        <position position="88"/>
    </location>
</feature>
<feature type="sequence conflict" description="In Ref. 3; AAC40189." evidence="11" ref="3">
    <original>N</original>
    <variation>T</variation>
    <location>
        <position position="408"/>
    </location>
</feature>
<feature type="sequence conflict" description="In Ref. 1; CAA11688." evidence="11" ref="1">
    <original>C</original>
    <variation>S</variation>
    <location>
        <position position="568"/>
    </location>
</feature>
<feature type="sequence conflict" description="In Ref. 1; CAA11688." evidence="11" ref="1">
    <original>N</original>
    <variation>K</variation>
    <location>
        <position position="688"/>
    </location>
</feature>
<organism>
    <name type="scientific">Mus musculus</name>
    <name type="common">Mouse</name>
    <dbReference type="NCBI Taxonomy" id="10090"/>
    <lineage>
        <taxon>Eukaryota</taxon>
        <taxon>Metazoa</taxon>
        <taxon>Chordata</taxon>
        <taxon>Craniata</taxon>
        <taxon>Vertebrata</taxon>
        <taxon>Euteleostomi</taxon>
        <taxon>Mammalia</taxon>
        <taxon>Eutheria</taxon>
        <taxon>Euarchontoglires</taxon>
        <taxon>Glires</taxon>
        <taxon>Rodentia</taxon>
        <taxon>Myomorpha</taxon>
        <taxon>Muroidea</taxon>
        <taxon>Muridae</taxon>
        <taxon>Murinae</taxon>
        <taxon>Mus</taxon>
        <taxon>Mus</taxon>
    </lineage>
</organism>
<name>S27A5_MOUSE</name>
<gene>
    <name type="primary">Slc27a5</name>
    <name type="synonym">Acsb</name>
    <name type="synonym">Acsvl6</name>
    <name type="synonym">Fatp5</name>
    <name type="synonym">Vlacsr</name>
</gene>